<accession>A0A0B4J249</accession>
<feature type="signal peptide" evidence="1">
    <location>
        <begin position="1"/>
        <end position="22"/>
    </location>
</feature>
<feature type="chain" id="PRO_0000443254" description="T cell receptor alpha variable 5" evidence="1">
    <location>
        <begin position="23"/>
        <end position="113"/>
    </location>
</feature>
<feature type="domain" description="Ig-like" evidence="2">
    <location>
        <begin position="23"/>
        <end position="113" status="greater than"/>
    </location>
</feature>
<feature type="glycosylation site" description="N-linked (GlcNAc...) asparagine" evidence="1">
    <location>
        <position position="42"/>
    </location>
</feature>
<feature type="disulfide bond" evidence="2">
    <location>
        <begin position="43"/>
        <end position="110"/>
    </location>
</feature>
<feature type="non-terminal residue">
    <location>
        <position position="113"/>
    </location>
</feature>
<organism>
    <name type="scientific">Homo sapiens</name>
    <name type="common">Human</name>
    <dbReference type="NCBI Taxonomy" id="9606"/>
    <lineage>
        <taxon>Eukaryota</taxon>
        <taxon>Metazoa</taxon>
        <taxon>Chordata</taxon>
        <taxon>Craniata</taxon>
        <taxon>Vertebrata</taxon>
        <taxon>Euteleostomi</taxon>
        <taxon>Mammalia</taxon>
        <taxon>Eutheria</taxon>
        <taxon>Euarchontoglires</taxon>
        <taxon>Primates</taxon>
        <taxon>Haplorrhini</taxon>
        <taxon>Catarrhini</taxon>
        <taxon>Hominidae</taxon>
        <taxon>Homo</taxon>
    </lineage>
</organism>
<evidence type="ECO:0000255" key="1"/>
<evidence type="ECO:0000255" key="2">
    <source>
        <dbReference type="PROSITE-ProRule" id="PRU00114"/>
    </source>
</evidence>
<evidence type="ECO:0000303" key="3">
    <source>
    </source>
</evidence>
<evidence type="ECO:0000303" key="4">
    <source>
    </source>
</evidence>
<evidence type="ECO:0000303" key="5">
    <source>
    </source>
</evidence>
<evidence type="ECO:0000303" key="6">
    <source>
    </source>
</evidence>
<evidence type="ECO:0000303" key="7">
    <source>
    </source>
</evidence>
<evidence type="ECO:0000303" key="8">
    <source ref="2"/>
</evidence>
<evidence type="ECO:0000305" key="9"/>
<protein>
    <recommendedName>
        <fullName evidence="8">T cell receptor alpha variable 5</fullName>
    </recommendedName>
</protein>
<reference key="1">
    <citation type="journal article" date="2003" name="Nature">
        <title>The DNA sequence and analysis of human chromosome 14.</title>
        <authorList>
            <person name="Heilig R."/>
            <person name="Eckenberg R."/>
            <person name="Petit J.-L."/>
            <person name="Fonknechten N."/>
            <person name="Da Silva C."/>
            <person name="Cattolico L."/>
            <person name="Levy M."/>
            <person name="Barbe V."/>
            <person name="De Berardinis V."/>
            <person name="Ureta-Vidal A."/>
            <person name="Pelletier E."/>
            <person name="Vico V."/>
            <person name="Anthouard V."/>
            <person name="Rowen L."/>
            <person name="Madan A."/>
            <person name="Qin S."/>
            <person name="Sun H."/>
            <person name="Du H."/>
            <person name="Pepin K."/>
            <person name="Artiguenave F."/>
            <person name="Robert C."/>
            <person name="Cruaud C."/>
            <person name="Bruels T."/>
            <person name="Jaillon O."/>
            <person name="Friedlander L."/>
            <person name="Samson G."/>
            <person name="Brottier P."/>
            <person name="Cure S."/>
            <person name="Segurens B."/>
            <person name="Aniere F."/>
            <person name="Samain S."/>
            <person name="Crespeau H."/>
            <person name="Abbasi N."/>
            <person name="Aiach N."/>
            <person name="Boscus D."/>
            <person name="Dickhoff R."/>
            <person name="Dors M."/>
            <person name="Dubois I."/>
            <person name="Friedman C."/>
            <person name="Gouyvenoux M."/>
            <person name="James R."/>
            <person name="Madan A."/>
            <person name="Mairey-Estrada B."/>
            <person name="Mangenot S."/>
            <person name="Martins N."/>
            <person name="Menard M."/>
            <person name="Oztas S."/>
            <person name="Ratcliffe A."/>
            <person name="Shaffer T."/>
            <person name="Trask B."/>
            <person name="Vacherie B."/>
            <person name="Bellemere C."/>
            <person name="Belser C."/>
            <person name="Besnard-Gonnet M."/>
            <person name="Bartol-Mavel D."/>
            <person name="Boutard M."/>
            <person name="Briez-Silla S."/>
            <person name="Combette S."/>
            <person name="Dufosse-Laurent V."/>
            <person name="Ferron C."/>
            <person name="Lechaplais C."/>
            <person name="Louesse C."/>
            <person name="Muselet D."/>
            <person name="Magdelenat G."/>
            <person name="Pateau E."/>
            <person name="Petit E."/>
            <person name="Sirvain-Trukniewicz P."/>
            <person name="Trybou A."/>
            <person name="Vega-Czarny N."/>
            <person name="Bataille E."/>
            <person name="Bluet E."/>
            <person name="Bordelais I."/>
            <person name="Dubois M."/>
            <person name="Dumont C."/>
            <person name="Guerin T."/>
            <person name="Haffray S."/>
            <person name="Hammadi R."/>
            <person name="Muanga J."/>
            <person name="Pellouin V."/>
            <person name="Robert D."/>
            <person name="Wunderle E."/>
            <person name="Gauguet G."/>
            <person name="Roy A."/>
            <person name="Sainte-Marthe L."/>
            <person name="Verdier J."/>
            <person name="Verdier-Discala C."/>
            <person name="Hillier L.W."/>
            <person name="Fulton L."/>
            <person name="McPherson J."/>
            <person name="Matsuda F."/>
            <person name="Wilson R."/>
            <person name="Scarpelli C."/>
            <person name="Gyapay G."/>
            <person name="Wincker P."/>
            <person name="Saurin W."/>
            <person name="Quetier F."/>
            <person name="Waterston R."/>
            <person name="Hood L."/>
            <person name="Weissenbach J."/>
        </authorList>
    </citation>
    <scope>NUCLEOTIDE SEQUENCE [LARGE SCALE GENOMIC DNA] (IMGT ALLELE TRAV5*01)</scope>
</reference>
<reference key="2">
    <citation type="book" date="2001" name="The T Cell Receptor FactsBook.">
        <title>The T Cell Receptor FactsBook.</title>
        <editorList>
            <person name="Lefranc M.P."/>
            <person name="Lefranc G."/>
        </editorList>
        <authorList>
            <person name="Lefranc M.P."/>
            <person name="Lefranc G."/>
        </authorList>
    </citation>
    <scope>NOMENCLATURE</scope>
</reference>
<reference key="3">
    <citation type="journal article" date="2004" name="Nat. Rev. Immunol.">
        <title>The many important facets of T-cell repertoire diversity.</title>
        <authorList>
            <person name="Nikolich-Zugich J."/>
            <person name="Slifka M.K."/>
            <person name="Messaoudi I."/>
        </authorList>
    </citation>
    <scope>REVIEW ON T CELL REPERTOIRE DIVERSITY</scope>
</reference>
<reference key="4">
    <citation type="journal article" date="2010" name="Cold Spring Harb. Perspect. Biol.">
        <title>Structural biology of the T-cell receptor: insights into receptor assembly, ligand recognition, and initiation of signaling.</title>
        <authorList>
            <person name="Wucherpfennig K.W."/>
            <person name="Gagnon E."/>
            <person name="Call M.J."/>
            <person name="Huseby E.S."/>
            <person name="Call M.E."/>
        </authorList>
    </citation>
    <scope>REVIEW ON T CELL RECEPTOR-CD3 COMPLEX ASSEMBLY</scope>
    <scope>SUBCELLULAR LOCATION</scope>
</reference>
<reference key="5">
    <citation type="journal article" date="2013" name="Nat. Rev. Immunol.">
        <title>T cell receptor signalling networks: branched, diversified and bounded.</title>
        <authorList>
            <person name="Brownlie R.J."/>
            <person name="Zamoyska R."/>
        </authorList>
    </citation>
    <scope>REVIEW ON T CELL RECEPTOR SIGNALING</scope>
</reference>
<reference key="6">
    <citation type="journal article" date="2014" name="Front. Immunol.">
        <title>Immunoglobulin and T Cell Receptor Genes: IMGT((R)) and the Birth and Rise of Immunoinformatics.</title>
        <authorList>
            <person name="Lefranc M.P."/>
        </authorList>
    </citation>
    <scope>NOMENCLATURE</scope>
</reference>
<reference key="7">
    <citation type="journal article" date="2015" name="Annu. Rev. Immunol.">
        <title>T cell antigen receptor recognition of antigen-presenting molecules.</title>
        <authorList>
            <person name="Rossjohn J."/>
            <person name="Gras S."/>
            <person name="Miles J.J."/>
            <person name="Turner S.J."/>
            <person name="Godfrey D.I."/>
            <person name="McCluskey J."/>
        </authorList>
    </citation>
    <scope>REVIEW ON FUNCTION</scope>
</reference>
<keyword id="KW-1064">Adaptive immunity</keyword>
<keyword id="KW-1003">Cell membrane</keyword>
<keyword id="KW-1015">Disulfide bond</keyword>
<keyword id="KW-0325">Glycoprotein</keyword>
<keyword id="KW-0391">Immunity</keyword>
<keyword id="KW-0393">Immunoglobulin domain</keyword>
<keyword id="KW-0472">Membrane</keyword>
<keyword id="KW-1267">Proteomics identification</keyword>
<keyword id="KW-0675">Receptor</keyword>
<keyword id="KW-1185">Reference proteome</keyword>
<keyword id="KW-0732">Signal</keyword>
<keyword id="KW-1279">T cell receptor</keyword>
<comment type="function">
    <text evidence="3 5 6 7">V region of the variable domain of T cell receptor (TR) alpha chain that participates in the antigen recognition (PubMed:24600447). Alpha-beta T cell receptors are antigen specific receptors which are essential to the immune response and are present on the cell surface of T lymphocytes. Recognize peptide-major histocompatibility (MH) (pMH) complexes that are displayed by antigen presenting cells (APC), a prerequisite for efficient T cell adaptive immunity against pathogens (PubMed:25493333). Binding of alpha-beta TR to pMH complex initiates TR-CD3 clustering on the cell surface and intracellular activation of LCK that phosphorylates the ITAM motifs of CD3G, CD3D, CD3E and CD247 enabling the recruitment of ZAP70. In turn ZAP70 phosphorylates LAT, which recruits numerous signaling molecules to form the LAT signalosome. The LAT signalosome propagates signal branching to three major signaling pathways, the calcium, the mitogen-activated protein kinase (MAPK) kinase and the nuclear factor NF-kappa-B (NF-kB) pathways, leading to the mobilization of transcription factors that are critical for gene expression and essential for T cell growth and differentiation (PubMed:23524462). The T cell repertoire is generated in the thymus, by V-(D)-J rearrangement. This repertoire is then shaped by intrathymic selection events to generate a peripheral T cell pool of self-MH restricted, non-autoaggressive T cells. Post-thymic interaction of alpha-beta TR with the pMH complexes shapes TR structural and functional avidity (PubMed:15040585).</text>
</comment>
<comment type="subunit">
    <text evidence="4">Alpha-beta TR is a heterodimer composed of an alpha and beta chain; disulfide-linked. The alpha-beta TR is associated with the transmembrane signaling CD3 coreceptor proteins to form the TR-CD3 (TcR or TCR). The assembly of alpha-beta TR heterodimers with CD3 occurs in the endoplasmic reticulum where a single alpha-beta TR heterodimer associates with one CD3D-CD3E heterodimer, one CD3G-CD3E heterodimer and one CD247 homodimer forming a stable octameric structure. CD3D-CD3E and CD3G-CD3E heterodimers preferentially associate with TR alpha and TR beta chains, respectively. The association of the CD247 homodimer is the last step of TcR assembly in the endoplasmic reticulum and is required for transport to the cell surface.</text>
</comment>
<comment type="subcellular location">
    <subcellularLocation>
        <location evidence="4">Cell membrane</location>
    </subcellularLocation>
</comment>
<comment type="polymorphism">
    <text evidence="9">There are several alleles. The sequence shown is that of IMGT allele TRAV5*01.</text>
</comment>
<sequence length="113" mass="12968">MKTFAGFSFLFLWLQLDCMSRGEDVEQSLFLSVREGDSSVINCTYTDSSSTYLYWYKQEPGAGLQLLTYIFSNMDMKQDQRLTVLLNKKDKHLSLRIADTQTGDSAIYFCAES</sequence>
<proteinExistence type="evidence at protein level"/>
<dbReference type="EMBL" id="AC243972">
    <property type="status" value="NOT_ANNOTATED_CDS"/>
    <property type="molecule type" value="Genomic_DNA"/>
</dbReference>
<dbReference type="SMR" id="A0A0B4J249"/>
<dbReference type="FunCoup" id="A0A0B4J249">
    <property type="interactions" value="315"/>
</dbReference>
<dbReference type="IMGT_GENE-DB" id="TRAV5"/>
<dbReference type="GlyCosmos" id="A0A0B4J249">
    <property type="glycosylation" value="1 site, No reported glycans"/>
</dbReference>
<dbReference type="GlyGen" id="A0A0B4J249">
    <property type="glycosylation" value="1 site"/>
</dbReference>
<dbReference type="BioMuta" id="TRAV5"/>
<dbReference type="Ensembl" id="ENST00000390427.3">
    <property type="protein sequence ID" value="ENSP00000446355.1"/>
    <property type="gene ID" value="ENSG00000211779.3"/>
</dbReference>
<dbReference type="AGR" id="HGNC:12143"/>
<dbReference type="GeneCards" id="TRAV5"/>
<dbReference type="HGNC" id="HGNC:12143">
    <property type="gene designation" value="TRAV5"/>
</dbReference>
<dbReference type="HPA" id="ENSG00000211779">
    <property type="expression patterns" value="Tissue enriched (lymphoid)"/>
</dbReference>
<dbReference type="neXtProt" id="NX_A0A0B4J249"/>
<dbReference type="OpenTargets" id="ENSG00000211779"/>
<dbReference type="VEuPathDB" id="HostDB:ENSG00000211779"/>
<dbReference type="GeneTree" id="ENSGT00940000159469"/>
<dbReference type="HOGENOM" id="CLU_077975_8_3_1"/>
<dbReference type="InParanoid" id="A0A0B4J249"/>
<dbReference type="OMA" id="IFSNMDM"/>
<dbReference type="OrthoDB" id="8947657at2759"/>
<dbReference type="PAN-GO" id="A0A0B4J249">
    <property type="GO annotations" value="1 GO annotation based on evolutionary models"/>
</dbReference>
<dbReference type="PhylomeDB" id="A0A0B4J249"/>
<dbReference type="SignaLink" id="A0A0B4J249"/>
<dbReference type="ChiTaRS" id="TRAV5">
    <property type="organism name" value="human"/>
</dbReference>
<dbReference type="Pharos" id="A0A0B4J249">
    <property type="development level" value="Tdark"/>
</dbReference>
<dbReference type="PRO" id="PR:A0A0B4J249"/>
<dbReference type="Proteomes" id="UP000005640">
    <property type="component" value="Chromosome 14"/>
</dbReference>
<dbReference type="RNAct" id="A0A0B4J249">
    <property type="molecule type" value="protein"/>
</dbReference>
<dbReference type="Bgee" id="ENSG00000211779">
    <property type="expression patterns" value="Expressed in male germ line stem cell (sensu Vertebrata) in testis and 99 other cell types or tissues"/>
</dbReference>
<dbReference type="GO" id="GO:0042101">
    <property type="term" value="C:T cell receptor complex"/>
    <property type="evidence" value="ECO:0007669"/>
    <property type="project" value="UniProtKB-KW"/>
</dbReference>
<dbReference type="GO" id="GO:0002250">
    <property type="term" value="P:adaptive immune response"/>
    <property type="evidence" value="ECO:0007669"/>
    <property type="project" value="UniProtKB-KW"/>
</dbReference>
<dbReference type="GO" id="GO:0009617">
    <property type="term" value="P:response to bacterium"/>
    <property type="evidence" value="ECO:0000318"/>
    <property type="project" value="GO_Central"/>
</dbReference>
<dbReference type="Gene3D" id="2.60.40.10">
    <property type="entry name" value="Immunoglobulins"/>
    <property type="match status" value="1"/>
</dbReference>
<dbReference type="InterPro" id="IPR007110">
    <property type="entry name" value="Ig-like_dom"/>
</dbReference>
<dbReference type="InterPro" id="IPR036179">
    <property type="entry name" value="Ig-like_dom_sf"/>
</dbReference>
<dbReference type="InterPro" id="IPR013783">
    <property type="entry name" value="Ig-like_fold"/>
</dbReference>
<dbReference type="InterPro" id="IPR013106">
    <property type="entry name" value="Ig_V-set"/>
</dbReference>
<dbReference type="InterPro" id="IPR051006">
    <property type="entry name" value="TCR_variable_domain"/>
</dbReference>
<dbReference type="PANTHER" id="PTHR19343:SF14">
    <property type="entry name" value="IG-LIKE DOMAIN-CONTAINING PROTEIN-RELATED"/>
    <property type="match status" value="1"/>
</dbReference>
<dbReference type="PANTHER" id="PTHR19343">
    <property type="entry name" value="T CELL RECEPTOR ALPHA VARIABLE 1-2"/>
    <property type="match status" value="1"/>
</dbReference>
<dbReference type="Pfam" id="PF07686">
    <property type="entry name" value="V-set"/>
    <property type="match status" value="1"/>
</dbReference>
<dbReference type="SMART" id="SM00406">
    <property type="entry name" value="IGv"/>
    <property type="match status" value="1"/>
</dbReference>
<dbReference type="SUPFAM" id="SSF48726">
    <property type="entry name" value="Immunoglobulin"/>
    <property type="match status" value="1"/>
</dbReference>
<dbReference type="PROSITE" id="PS50835">
    <property type="entry name" value="IG_LIKE"/>
    <property type="match status" value="1"/>
</dbReference>
<name>TVA5_HUMAN</name>
<gene>
    <name evidence="8" type="primary">TRAV5</name>
</gene>